<dbReference type="EMBL" id="AJ720110">
    <property type="protein sequence ID" value="CAG31769.1"/>
    <property type="molecule type" value="mRNA"/>
</dbReference>
<dbReference type="RefSeq" id="NP_001025867.1">
    <property type="nucleotide sequence ID" value="NM_001030696.2"/>
</dbReference>
<dbReference type="RefSeq" id="XP_024997346.1">
    <property type="nucleotide sequence ID" value="XM_025141578.3"/>
</dbReference>
<dbReference type="RefSeq" id="XP_040505411.1">
    <property type="nucleotide sequence ID" value="XM_040649477.2"/>
</dbReference>
<dbReference type="RefSeq" id="XP_040505413.1">
    <property type="nucleotide sequence ID" value="XM_040649479.2"/>
</dbReference>
<dbReference type="RefSeq" id="XP_046757960.1">
    <property type="nucleotide sequence ID" value="XM_046902004.1"/>
</dbReference>
<dbReference type="RefSeq" id="XP_046785265.1">
    <property type="nucleotide sequence ID" value="XM_046929309.1"/>
</dbReference>
<dbReference type="RefSeq" id="XP_046785266.1">
    <property type="nucleotide sequence ID" value="XM_046929310.1"/>
</dbReference>
<dbReference type="RefSeq" id="XP_046785267.1">
    <property type="nucleotide sequence ID" value="XM_046929311.1"/>
</dbReference>
<dbReference type="RefSeq" id="XP_046785268.1">
    <property type="nucleotide sequence ID" value="XM_046929312.1"/>
</dbReference>
<dbReference type="SMR" id="Q5ZKH4"/>
<dbReference type="FunCoup" id="Q5ZKH4">
    <property type="interactions" value="938"/>
</dbReference>
<dbReference type="STRING" id="9031.ENSGALP00000053253"/>
<dbReference type="PaxDb" id="9031-ENSGALP00000001751"/>
<dbReference type="GeneID" id="417317"/>
<dbReference type="KEGG" id="gga:417317"/>
<dbReference type="CTD" id="81565"/>
<dbReference type="VEuPathDB" id="HostDB:geneid_417317"/>
<dbReference type="eggNOG" id="KOG1853">
    <property type="taxonomic scope" value="Eukaryota"/>
</dbReference>
<dbReference type="HOGENOM" id="CLU_057872_1_0_1"/>
<dbReference type="InParanoid" id="Q5ZKH4"/>
<dbReference type="OrthoDB" id="5877028at2759"/>
<dbReference type="PhylomeDB" id="Q5ZKH4"/>
<dbReference type="Reactome" id="R-GGA-141444">
    <property type="pathway name" value="Amplification of signal from unattached kinetochores via a MAD2 inhibitory signal"/>
</dbReference>
<dbReference type="Reactome" id="R-GGA-2467813">
    <property type="pathway name" value="Separation of Sister Chromatids"/>
</dbReference>
<dbReference type="Reactome" id="R-GGA-2500257">
    <property type="pathway name" value="Resolution of Sister Chromatid Cohesion"/>
</dbReference>
<dbReference type="Reactome" id="R-GGA-5663220">
    <property type="pathway name" value="RHO GTPases Activate Formins"/>
</dbReference>
<dbReference type="Reactome" id="R-GGA-9648025">
    <property type="pathway name" value="EML4 and NUDC in mitotic spindle formation"/>
</dbReference>
<dbReference type="PRO" id="PR:Q5ZKH4"/>
<dbReference type="Proteomes" id="UP000000539">
    <property type="component" value="Chromosome 18"/>
</dbReference>
<dbReference type="Bgee" id="ENSGALG00000001163">
    <property type="expression patterns" value="Expressed in lung and 14 other cell types or tissues"/>
</dbReference>
<dbReference type="GO" id="GO:0005813">
    <property type="term" value="C:centrosome"/>
    <property type="evidence" value="ECO:0000318"/>
    <property type="project" value="GO_Central"/>
</dbReference>
<dbReference type="GO" id="GO:0005737">
    <property type="term" value="C:cytoplasm"/>
    <property type="evidence" value="ECO:0007669"/>
    <property type="project" value="UniProtKB-KW"/>
</dbReference>
<dbReference type="GO" id="GO:0005871">
    <property type="term" value="C:kinesin complex"/>
    <property type="evidence" value="ECO:0000318"/>
    <property type="project" value="GO_Central"/>
</dbReference>
<dbReference type="GO" id="GO:0000776">
    <property type="term" value="C:kinetochore"/>
    <property type="evidence" value="ECO:0000318"/>
    <property type="project" value="GO_Central"/>
</dbReference>
<dbReference type="GO" id="GO:0005874">
    <property type="term" value="C:microtubule"/>
    <property type="evidence" value="ECO:0007669"/>
    <property type="project" value="UniProtKB-KW"/>
</dbReference>
<dbReference type="GO" id="GO:0005819">
    <property type="term" value="C:spindle"/>
    <property type="evidence" value="ECO:0007669"/>
    <property type="project" value="UniProtKB-SubCell"/>
</dbReference>
<dbReference type="GO" id="GO:0008017">
    <property type="term" value="F:microtubule binding"/>
    <property type="evidence" value="ECO:0000318"/>
    <property type="project" value="GO_Central"/>
</dbReference>
<dbReference type="GO" id="GO:0016477">
    <property type="term" value="P:cell migration"/>
    <property type="evidence" value="ECO:0000318"/>
    <property type="project" value="GO_Central"/>
</dbReference>
<dbReference type="GO" id="GO:0051642">
    <property type="term" value="P:centrosome localization"/>
    <property type="evidence" value="ECO:0000318"/>
    <property type="project" value="GO_Central"/>
</dbReference>
<dbReference type="GO" id="GO:0007059">
    <property type="term" value="P:chromosome segregation"/>
    <property type="evidence" value="ECO:0000318"/>
    <property type="project" value="GO_Central"/>
</dbReference>
<dbReference type="GO" id="GO:0051303">
    <property type="term" value="P:establishment of chromosome localization"/>
    <property type="evidence" value="ECO:0000318"/>
    <property type="project" value="GO_Central"/>
</dbReference>
<dbReference type="GO" id="GO:0000132">
    <property type="term" value="P:establishment of mitotic spindle orientation"/>
    <property type="evidence" value="ECO:0000318"/>
    <property type="project" value="GO_Central"/>
</dbReference>
<dbReference type="GO" id="GO:0032418">
    <property type="term" value="P:lysosome localization"/>
    <property type="evidence" value="ECO:0000250"/>
    <property type="project" value="UniProtKB"/>
</dbReference>
<dbReference type="GO" id="GO:0007020">
    <property type="term" value="P:microtubule nucleation"/>
    <property type="evidence" value="ECO:0000318"/>
    <property type="project" value="GO_Central"/>
</dbReference>
<dbReference type="GO" id="GO:0007100">
    <property type="term" value="P:mitotic centrosome separation"/>
    <property type="evidence" value="ECO:0000318"/>
    <property type="project" value="GO_Central"/>
</dbReference>
<dbReference type="GO" id="GO:1900029">
    <property type="term" value="P:positive regulation of ruffle assembly"/>
    <property type="evidence" value="ECO:0000250"/>
    <property type="project" value="UniProtKB"/>
</dbReference>
<dbReference type="GO" id="GO:0010975">
    <property type="term" value="P:regulation of neuron projection development"/>
    <property type="evidence" value="ECO:0000318"/>
    <property type="project" value="GO_Central"/>
</dbReference>
<dbReference type="GO" id="GO:0047496">
    <property type="term" value="P:vesicle transport along microtubule"/>
    <property type="evidence" value="ECO:0000318"/>
    <property type="project" value="GO_Central"/>
</dbReference>
<dbReference type="Gene3D" id="6.10.250.1080">
    <property type="match status" value="1"/>
</dbReference>
<dbReference type="InterPro" id="IPR033494">
    <property type="entry name" value="NUDE"/>
</dbReference>
<dbReference type="InterPro" id="IPR006964">
    <property type="entry name" value="NUDE_dom"/>
</dbReference>
<dbReference type="PANTHER" id="PTHR10921">
    <property type="entry name" value="NUCLEAR DISTRIBUTION PROTEIN NUDE HOMOLOG 1"/>
    <property type="match status" value="1"/>
</dbReference>
<dbReference type="PANTHER" id="PTHR10921:SF0">
    <property type="entry name" value="NUCLEAR DISTRIBUTION PROTEIN NUDE-LIKE 1"/>
    <property type="match status" value="1"/>
</dbReference>
<dbReference type="Pfam" id="PF04880">
    <property type="entry name" value="NUDE_C"/>
    <property type="match status" value="1"/>
</dbReference>
<comment type="function">
    <text evidence="1 2">Required for organization of the cellular microtubule array and microtubule anchoring at the centrosome. Positively regulates the activity of the minus-end directed microtubule motor protein dynein. May enhance dynein-mediated microtubule sliding by targeting dynein to the microtubule plus end. Positively regulates lysosome peripheral distribution and ruffled border formation in osteoclasts.</text>
</comment>
<comment type="subcellular location">
    <subcellularLocation>
        <location evidence="1">Cytoplasm</location>
        <location evidence="1">Cytoskeleton</location>
    </subcellularLocation>
    <subcellularLocation>
        <location evidence="1">Cytoplasm</location>
        <location evidence="1">Cytoskeleton</location>
        <location evidence="1">Microtubule organizing center</location>
        <location evidence="1">Centrosome</location>
    </subcellularLocation>
    <subcellularLocation>
        <location evidence="1">Cytoplasm</location>
        <location evidence="1">Cytoskeleton</location>
        <location evidence="1">Spindle</location>
    </subcellularLocation>
    <text evidence="1">Localizes to the interphase centrosome and the mitotic spindle.</text>
</comment>
<comment type="PTM">
    <text evidence="1">Phosphorylated in mitosis.</text>
</comment>
<comment type="similarity">
    <text evidence="5">Belongs to the nudE family.</text>
</comment>
<organism>
    <name type="scientific">Gallus gallus</name>
    <name type="common">Chicken</name>
    <dbReference type="NCBI Taxonomy" id="9031"/>
    <lineage>
        <taxon>Eukaryota</taxon>
        <taxon>Metazoa</taxon>
        <taxon>Chordata</taxon>
        <taxon>Craniata</taxon>
        <taxon>Vertebrata</taxon>
        <taxon>Euteleostomi</taxon>
        <taxon>Archelosauria</taxon>
        <taxon>Archosauria</taxon>
        <taxon>Dinosauria</taxon>
        <taxon>Saurischia</taxon>
        <taxon>Theropoda</taxon>
        <taxon>Coelurosauria</taxon>
        <taxon>Aves</taxon>
        <taxon>Neognathae</taxon>
        <taxon>Galloanserae</taxon>
        <taxon>Galliformes</taxon>
        <taxon>Phasianidae</taxon>
        <taxon>Phasianinae</taxon>
        <taxon>Gallus</taxon>
    </lineage>
</organism>
<accession>Q5ZKH4</accession>
<evidence type="ECO:0000250" key="1"/>
<evidence type="ECO:0000250" key="2">
    <source>
        <dbReference type="UniProtKB" id="Q9ERR1"/>
    </source>
</evidence>
<evidence type="ECO:0000255" key="3"/>
<evidence type="ECO:0000256" key="4">
    <source>
        <dbReference type="SAM" id="MobiDB-lite"/>
    </source>
</evidence>
<evidence type="ECO:0000305" key="5"/>
<name>NDEL1_CHICK</name>
<protein>
    <recommendedName>
        <fullName>Nuclear distribution protein nudE-like 1</fullName>
    </recommendedName>
</protein>
<gene>
    <name type="primary">NDEL1</name>
    <name type="ORF">RCJMB04_10n4</name>
</gene>
<proteinExistence type="evidence at transcript level"/>
<reference key="1">
    <citation type="journal article" date="2005" name="Genome Biol.">
        <title>Full-length cDNAs from chicken bursal lymphocytes to facilitate gene function analysis.</title>
        <authorList>
            <person name="Caldwell R.B."/>
            <person name="Kierzek A.M."/>
            <person name="Arakawa H."/>
            <person name="Bezzubov Y."/>
            <person name="Zaim J."/>
            <person name="Fiedler P."/>
            <person name="Kutter S."/>
            <person name="Blagodatski A."/>
            <person name="Kostovska D."/>
            <person name="Koter M."/>
            <person name="Plachy J."/>
            <person name="Carninci P."/>
            <person name="Hayashizaki Y."/>
            <person name="Buerstedde J.-M."/>
        </authorList>
    </citation>
    <scope>NUCLEOTIDE SEQUENCE [LARGE SCALE MRNA]</scope>
    <source>
        <strain>CB</strain>
        <tissue>Bursa of Fabricius</tissue>
    </source>
</reference>
<feature type="chain" id="PRO_0000240216" description="Nuclear distribution protein nudE-like 1">
    <location>
        <begin position="1"/>
        <end position="343"/>
    </location>
</feature>
<feature type="region of interest" description="Disordered" evidence="4">
    <location>
        <begin position="184"/>
        <end position="204"/>
    </location>
</feature>
<feature type="region of interest" description="Disordered" evidence="4">
    <location>
        <begin position="322"/>
        <end position="343"/>
    </location>
</feature>
<feature type="coiled-coil region" evidence="3">
    <location>
        <begin position="25"/>
        <end position="190"/>
    </location>
</feature>
<keyword id="KW-0175">Coiled coil</keyword>
<keyword id="KW-0963">Cytoplasm</keyword>
<keyword id="KW-0206">Cytoskeleton</keyword>
<keyword id="KW-0493">Microtubule</keyword>
<keyword id="KW-0597">Phosphoprotein</keyword>
<keyword id="KW-1185">Reference proteome</keyword>
<keyword id="KW-0813">Transport</keyword>
<sequence>MDSEEIPTFSSPKEETAYWKELSLKYKQSFQEAREELAEFQEGSRELEAELEAQLVQAEQRNRDLQADNQRLKYEVETLKEKLEHQYAQSYKQVSLLEDDLSQTRAIKDQLHKYVRELEQANDDLERAKRATIVSLEDFEQRLNQAIERNAFLESELDDKESLLVSVQRLKDEARDLRQELAVRERQQEVTRKSAPSSPTLDCEKMDSAVQASLSLPATPVGKGSENSFPSPKAIPNGFGTSPLTPSARISALNIVGDLLRKVGALESKLAACRNFAKDQASRKSYISGNANSSMMSSNGTKYPHPGHTSFFDKGAVNGFDQGTPGLGASRPSSAPGMLPLSV</sequence>